<feature type="chain" id="PRO_0000153007" description="GTP 3',8-cyclase">
    <location>
        <begin position="1"/>
        <end position="334"/>
    </location>
</feature>
<feature type="domain" description="Radical SAM core" evidence="2">
    <location>
        <begin position="13"/>
        <end position="239"/>
    </location>
</feature>
<feature type="binding site" evidence="1">
    <location>
        <position position="22"/>
    </location>
    <ligand>
        <name>GTP</name>
        <dbReference type="ChEBI" id="CHEBI:37565"/>
    </ligand>
</feature>
<feature type="binding site" evidence="1">
    <location>
        <position position="29"/>
    </location>
    <ligand>
        <name>[4Fe-4S] cluster</name>
        <dbReference type="ChEBI" id="CHEBI:49883"/>
        <label>1</label>
        <note>4Fe-4S-S-AdoMet</note>
    </ligand>
</feature>
<feature type="binding site" evidence="1">
    <location>
        <position position="33"/>
    </location>
    <ligand>
        <name>[4Fe-4S] cluster</name>
        <dbReference type="ChEBI" id="CHEBI:49883"/>
        <label>1</label>
        <note>4Fe-4S-S-AdoMet</note>
    </ligand>
</feature>
<feature type="binding site" evidence="1">
    <location>
        <position position="35"/>
    </location>
    <ligand>
        <name>S-adenosyl-L-methionine</name>
        <dbReference type="ChEBI" id="CHEBI:59789"/>
    </ligand>
</feature>
<feature type="binding site" evidence="1">
    <location>
        <position position="36"/>
    </location>
    <ligand>
        <name>[4Fe-4S] cluster</name>
        <dbReference type="ChEBI" id="CHEBI:49883"/>
        <label>1</label>
        <note>4Fe-4S-S-AdoMet</note>
    </ligand>
</feature>
<feature type="binding site" evidence="1">
    <location>
        <position position="73"/>
    </location>
    <ligand>
        <name>GTP</name>
        <dbReference type="ChEBI" id="CHEBI:37565"/>
    </ligand>
</feature>
<feature type="binding site" evidence="1">
    <location>
        <position position="77"/>
    </location>
    <ligand>
        <name>S-adenosyl-L-methionine</name>
        <dbReference type="ChEBI" id="CHEBI:59789"/>
    </ligand>
</feature>
<feature type="binding site" evidence="1">
    <location>
        <position position="104"/>
    </location>
    <ligand>
        <name>GTP</name>
        <dbReference type="ChEBI" id="CHEBI:37565"/>
    </ligand>
</feature>
<feature type="binding site" evidence="1">
    <location>
        <position position="128"/>
    </location>
    <ligand>
        <name>S-adenosyl-L-methionine</name>
        <dbReference type="ChEBI" id="CHEBI:59789"/>
    </ligand>
</feature>
<feature type="binding site" evidence="1">
    <location>
        <position position="165"/>
    </location>
    <ligand>
        <name>GTP</name>
        <dbReference type="ChEBI" id="CHEBI:37565"/>
    </ligand>
</feature>
<feature type="binding site" evidence="1">
    <location>
        <position position="199"/>
    </location>
    <ligand>
        <name>S-adenosyl-L-methionine</name>
        <dbReference type="ChEBI" id="CHEBI:59789"/>
    </ligand>
</feature>
<feature type="binding site" evidence="1">
    <location>
        <position position="262"/>
    </location>
    <ligand>
        <name>[4Fe-4S] cluster</name>
        <dbReference type="ChEBI" id="CHEBI:49883"/>
        <label>2</label>
        <note>4Fe-4S-substrate</note>
    </ligand>
</feature>
<feature type="binding site" evidence="1">
    <location>
        <position position="265"/>
    </location>
    <ligand>
        <name>[4Fe-4S] cluster</name>
        <dbReference type="ChEBI" id="CHEBI:49883"/>
        <label>2</label>
        <note>4Fe-4S-substrate</note>
    </ligand>
</feature>
<feature type="binding site" evidence="1">
    <location>
        <begin position="267"/>
        <end position="269"/>
    </location>
    <ligand>
        <name>GTP</name>
        <dbReference type="ChEBI" id="CHEBI:37565"/>
    </ligand>
</feature>
<feature type="binding site" evidence="1">
    <location>
        <position position="279"/>
    </location>
    <ligand>
        <name>[4Fe-4S] cluster</name>
        <dbReference type="ChEBI" id="CHEBI:49883"/>
        <label>2</label>
        <note>4Fe-4S-substrate</note>
    </ligand>
</feature>
<sequence>MERCSVAQQFEDKFHRKFYYLRLSVTDVCNFKCTYCLPDGYKPSGNKNSSFLSLPEIKRVVKAFADCGTSKVRITGGEPSLRKDFTDIIHSVATTPGIKKVATTTNGYRMAKQVADWREAGLTNINVSVDSLDPRMFHQITGENKFTEVMNGIERAFEVGYEQVKVNVVLMKDLNHHELPAFLNWIKDRPIQLRFIELMQTGEMDDLFSKHHVSGVAIRNQLIANGWLLKVRSHHDGPAQVFVHPDYKGEIGLIMPYEKDFCESCNRLRVSALGKLHLCLFGEHGVELRDLLERDDQENELIERIQSQLQTKSVSHFLHDGNTGMTPHLASIGG</sequence>
<accession>Q87MY0</accession>
<dbReference type="EC" id="4.1.99.22" evidence="1"/>
<dbReference type="EMBL" id="BA000031">
    <property type="protein sequence ID" value="BAC60359.1"/>
    <property type="molecule type" value="Genomic_DNA"/>
</dbReference>
<dbReference type="RefSeq" id="NP_798475.1">
    <property type="nucleotide sequence ID" value="NC_004603.1"/>
</dbReference>
<dbReference type="SMR" id="Q87MY0"/>
<dbReference type="KEGG" id="vpa:VP2096"/>
<dbReference type="PATRIC" id="fig|223926.6.peg.2007"/>
<dbReference type="eggNOG" id="COG2896">
    <property type="taxonomic scope" value="Bacteria"/>
</dbReference>
<dbReference type="HOGENOM" id="CLU_009273_0_1_6"/>
<dbReference type="UniPathway" id="UPA00344"/>
<dbReference type="Proteomes" id="UP000002493">
    <property type="component" value="Chromosome 1"/>
</dbReference>
<dbReference type="GO" id="GO:0051539">
    <property type="term" value="F:4 iron, 4 sulfur cluster binding"/>
    <property type="evidence" value="ECO:0007669"/>
    <property type="project" value="UniProtKB-UniRule"/>
</dbReference>
<dbReference type="GO" id="GO:0061799">
    <property type="term" value="F:cyclic pyranopterin monophosphate synthase activity"/>
    <property type="evidence" value="ECO:0007669"/>
    <property type="project" value="TreeGrafter"/>
</dbReference>
<dbReference type="GO" id="GO:0061798">
    <property type="term" value="F:GTP 3',8'-cyclase activity"/>
    <property type="evidence" value="ECO:0007669"/>
    <property type="project" value="UniProtKB-UniRule"/>
</dbReference>
<dbReference type="GO" id="GO:0005525">
    <property type="term" value="F:GTP binding"/>
    <property type="evidence" value="ECO:0007669"/>
    <property type="project" value="UniProtKB-UniRule"/>
</dbReference>
<dbReference type="GO" id="GO:0046872">
    <property type="term" value="F:metal ion binding"/>
    <property type="evidence" value="ECO:0007669"/>
    <property type="project" value="UniProtKB-KW"/>
</dbReference>
<dbReference type="GO" id="GO:1904047">
    <property type="term" value="F:S-adenosyl-L-methionine binding"/>
    <property type="evidence" value="ECO:0007669"/>
    <property type="project" value="UniProtKB-UniRule"/>
</dbReference>
<dbReference type="GO" id="GO:0006777">
    <property type="term" value="P:Mo-molybdopterin cofactor biosynthetic process"/>
    <property type="evidence" value="ECO:0007669"/>
    <property type="project" value="UniProtKB-UniRule"/>
</dbReference>
<dbReference type="CDD" id="cd01335">
    <property type="entry name" value="Radical_SAM"/>
    <property type="match status" value="1"/>
</dbReference>
<dbReference type="CDD" id="cd21117">
    <property type="entry name" value="Twitch_MoaA"/>
    <property type="match status" value="1"/>
</dbReference>
<dbReference type="FunFam" id="3.20.20.70:FF:000057">
    <property type="entry name" value="GTP 3',8-cyclase"/>
    <property type="match status" value="1"/>
</dbReference>
<dbReference type="Gene3D" id="3.20.20.70">
    <property type="entry name" value="Aldolase class I"/>
    <property type="match status" value="1"/>
</dbReference>
<dbReference type="HAMAP" id="MF_01225_B">
    <property type="entry name" value="MoaA_B"/>
    <property type="match status" value="1"/>
</dbReference>
<dbReference type="InterPro" id="IPR013785">
    <property type="entry name" value="Aldolase_TIM"/>
</dbReference>
<dbReference type="InterPro" id="IPR006638">
    <property type="entry name" value="Elp3/MiaA/NifB-like_rSAM"/>
</dbReference>
<dbReference type="InterPro" id="IPR013483">
    <property type="entry name" value="MoaA"/>
</dbReference>
<dbReference type="InterPro" id="IPR010505">
    <property type="entry name" value="MoaA_twitch"/>
</dbReference>
<dbReference type="InterPro" id="IPR050105">
    <property type="entry name" value="MoCo_biosynth_MoaA/MoaC"/>
</dbReference>
<dbReference type="InterPro" id="IPR007197">
    <property type="entry name" value="rSAM"/>
</dbReference>
<dbReference type="NCBIfam" id="TIGR02666">
    <property type="entry name" value="moaA"/>
    <property type="match status" value="1"/>
</dbReference>
<dbReference type="PANTHER" id="PTHR22960:SF28">
    <property type="entry name" value="GTP 3',8-CYCLASE"/>
    <property type="match status" value="1"/>
</dbReference>
<dbReference type="PANTHER" id="PTHR22960">
    <property type="entry name" value="MOLYBDOPTERIN COFACTOR SYNTHESIS PROTEIN A"/>
    <property type="match status" value="1"/>
</dbReference>
<dbReference type="Pfam" id="PF13353">
    <property type="entry name" value="Fer4_12"/>
    <property type="match status" value="1"/>
</dbReference>
<dbReference type="Pfam" id="PF06463">
    <property type="entry name" value="Mob_synth_C"/>
    <property type="match status" value="1"/>
</dbReference>
<dbReference type="Pfam" id="PF04055">
    <property type="entry name" value="Radical_SAM"/>
    <property type="match status" value="1"/>
</dbReference>
<dbReference type="SFLD" id="SFLDG01383">
    <property type="entry name" value="cyclic_pyranopterin_phosphate"/>
    <property type="match status" value="1"/>
</dbReference>
<dbReference type="SFLD" id="SFLDG01072">
    <property type="entry name" value="dehydrogenase_like"/>
    <property type="match status" value="1"/>
</dbReference>
<dbReference type="SMART" id="SM00729">
    <property type="entry name" value="Elp3"/>
    <property type="match status" value="1"/>
</dbReference>
<dbReference type="SUPFAM" id="SSF102114">
    <property type="entry name" value="Radical SAM enzymes"/>
    <property type="match status" value="1"/>
</dbReference>
<dbReference type="PROSITE" id="PS51918">
    <property type="entry name" value="RADICAL_SAM"/>
    <property type="match status" value="1"/>
</dbReference>
<evidence type="ECO:0000255" key="1">
    <source>
        <dbReference type="HAMAP-Rule" id="MF_01225"/>
    </source>
</evidence>
<evidence type="ECO:0000255" key="2">
    <source>
        <dbReference type="PROSITE-ProRule" id="PRU01266"/>
    </source>
</evidence>
<comment type="function">
    <text evidence="1">Catalyzes the cyclization of GTP to (8S)-3',8-cyclo-7,8-dihydroguanosine 5'-triphosphate.</text>
</comment>
<comment type="catalytic activity">
    <reaction evidence="1">
        <text>GTP + AH2 + S-adenosyl-L-methionine = (8S)-3',8-cyclo-7,8-dihydroguanosine 5'-triphosphate + 5'-deoxyadenosine + L-methionine + A + H(+)</text>
        <dbReference type="Rhea" id="RHEA:49576"/>
        <dbReference type="ChEBI" id="CHEBI:13193"/>
        <dbReference type="ChEBI" id="CHEBI:15378"/>
        <dbReference type="ChEBI" id="CHEBI:17319"/>
        <dbReference type="ChEBI" id="CHEBI:17499"/>
        <dbReference type="ChEBI" id="CHEBI:37565"/>
        <dbReference type="ChEBI" id="CHEBI:57844"/>
        <dbReference type="ChEBI" id="CHEBI:59789"/>
        <dbReference type="ChEBI" id="CHEBI:131766"/>
        <dbReference type="EC" id="4.1.99.22"/>
    </reaction>
</comment>
<comment type="cofactor">
    <cofactor evidence="1">
        <name>[4Fe-4S] cluster</name>
        <dbReference type="ChEBI" id="CHEBI:49883"/>
    </cofactor>
    <text evidence="1">Binds 2 [4Fe-4S] clusters. Binds 1 [4Fe-4S] cluster coordinated with 3 cysteines and an exchangeable S-adenosyl-L-methionine and 1 [4Fe-4S] cluster coordinated with 3 cysteines and the GTP-derived substrate.</text>
</comment>
<comment type="pathway">
    <text evidence="1">Cofactor biosynthesis; molybdopterin biosynthesis.</text>
</comment>
<comment type="subunit">
    <text evidence="1">Monomer and homodimer.</text>
</comment>
<comment type="similarity">
    <text evidence="1">Belongs to the radical SAM superfamily. MoaA family.</text>
</comment>
<reference key="1">
    <citation type="journal article" date="2003" name="Lancet">
        <title>Genome sequence of Vibrio parahaemolyticus: a pathogenic mechanism distinct from that of V. cholerae.</title>
        <authorList>
            <person name="Makino K."/>
            <person name="Oshima K."/>
            <person name="Kurokawa K."/>
            <person name="Yokoyama K."/>
            <person name="Uda T."/>
            <person name="Tagomori K."/>
            <person name="Iijima Y."/>
            <person name="Najima M."/>
            <person name="Nakano M."/>
            <person name="Yamashita A."/>
            <person name="Kubota Y."/>
            <person name="Kimura S."/>
            <person name="Yasunaga T."/>
            <person name="Honda T."/>
            <person name="Shinagawa H."/>
            <person name="Hattori M."/>
            <person name="Iida T."/>
        </authorList>
    </citation>
    <scope>NUCLEOTIDE SEQUENCE [LARGE SCALE GENOMIC DNA]</scope>
    <source>
        <strain>RIMD 2210633</strain>
    </source>
</reference>
<gene>
    <name evidence="1" type="primary">moaA</name>
    <name type="ordered locus">VP2096</name>
</gene>
<organism>
    <name type="scientific">Vibrio parahaemolyticus serotype O3:K6 (strain RIMD 2210633)</name>
    <dbReference type="NCBI Taxonomy" id="223926"/>
    <lineage>
        <taxon>Bacteria</taxon>
        <taxon>Pseudomonadati</taxon>
        <taxon>Pseudomonadota</taxon>
        <taxon>Gammaproteobacteria</taxon>
        <taxon>Vibrionales</taxon>
        <taxon>Vibrionaceae</taxon>
        <taxon>Vibrio</taxon>
    </lineage>
</organism>
<keyword id="KW-0004">4Fe-4S</keyword>
<keyword id="KW-0342">GTP-binding</keyword>
<keyword id="KW-0408">Iron</keyword>
<keyword id="KW-0411">Iron-sulfur</keyword>
<keyword id="KW-0456">Lyase</keyword>
<keyword id="KW-0479">Metal-binding</keyword>
<keyword id="KW-0501">Molybdenum cofactor biosynthesis</keyword>
<keyword id="KW-0547">Nucleotide-binding</keyword>
<keyword id="KW-0949">S-adenosyl-L-methionine</keyword>
<name>MOAA_VIBPA</name>
<proteinExistence type="inferred from homology"/>
<protein>
    <recommendedName>
        <fullName evidence="1">GTP 3',8-cyclase</fullName>
        <ecNumber evidence="1">4.1.99.22</ecNumber>
    </recommendedName>
    <alternativeName>
        <fullName evidence="1">Molybdenum cofactor biosynthesis protein A</fullName>
    </alternativeName>
</protein>